<organism>
    <name type="scientific">Lactiplantibacillus plantarum (strain ATCC BAA-793 / NCIMB 8826 / WCFS1)</name>
    <name type="common">Lactobacillus plantarum</name>
    <dbReference type="NCBI Taxonomy" id="220668"/>
    <lineage>
        <taxon>Bacteria</taxon>
        <taxon>Bacillati</taxon>
        <taxon>Bacillota</taxon>
        <taxon>Bacilli</taxon>
        <taxon>Lactobacillales</taxon>
        <taxon>Lactobacillaceae</taxon>
        <taxon>Lactiplantibacillus</taxon>
    </lineage>
</organism>
<reference key="1">
    <citation type="journal article" date="2003" name="Proc. Natl. Acad. Sci. U.S.A.">
        <title>Complete genome sequence of Lactobacillus plantarum WCFS1.</title>
        <authorList>
            <person name="Kleerebezem M."/>
            <person name="Boekhorst J."/>
            <person name="van Kranenburg R."/>
            <person name="Molenaar D."/>
            <person name="Kuipers O.P."/>
            <person name="Leer R."/>
            <person name="Tarchini R."/>
            <person name="Peters S.A."/>
            <person name="Sandbrink H.M."/>
            <person name="Fiers M.W.E.J."/>
            <person name="Stiekema W."/>
            <person name="Klein Lankhorst R.M."/>
            <person name="Bron P.A."/>
            <person name="Hoffer S.M."/>
            <person name="Nierop Groot M.N."/>
            <person name="Kerkhoven R."/>
            <person name="De Vries M."/>
            <person name="Ursing B."/>
            <person name="De Vos W.M."/>
            <person name="Siezen R.J."/>
        </authorList>
    </citation>
    <scope>NUCLEOTIDE SEQUENCE [LARGE SCALE GENOMIC DNA]</scope>
    <source>
        <strain>ATCC BAA-793 / NCIMB 8826 / WCFS1</strain>
    </source>
</reference>
<reference key="2">
    <citation type="journal article" date="2012" name="J. Bacteriol.">
        <title>Complete resequencing and reannotation of the Lactobacillus plantarum WCFS1 genome.</title>
        <authorList>
            <person name="Siezen R.J."/>
            <person name="Francke C."/>
            <person name="Renckens B."/>
            <person name="Boekhorst J."/>
            <person name="Wels M."/>
            <person name="Kleerebezem M."/>
            <person name="van Hijum S.A."/>
        </authorList>
    </citation>
    <scope>NUCLEOTIDE SEQUENCE [LARGE SCALE GENOMIC DNA]</scope>
    <scope>GENOME REANNOTATION</scope>
    <source>
        <strain>ATCC BAA-793 / NCIMB 8826 / WCFS1</strain>
    </source>
</reference>
<feature type="chain" id="PRO_0000152382" description="Imidazole glycerol phosphate synthase subunit HisH">
    <location>
        <begin position="1"/>
        <end position="208"/>
    </location>
</feature>
<feature type="domain" description="Glutamine amidotransferase type-1" evidence="1">
    <location>
        <begin position="1"/>
        <end position="206"/>
    </location>
</feature>
<feature type="active site" description="Nucleophile" evidence="1">
    <location>
        <position position="79"/>
    </location>
</feature>
<feature type="active site" evidence="1">
    <location>
        <position position="181"/>
    </location>
</feature>
<feature type="active site" evidence="1">
    <location>
        <position position="183"/>
    </location>
</feature>
<sequence length="208" mass="22347">MFAIVDYDTGNTRNLKKAFDYLQVSTILTADPQQLAAADAVILPGVGAFAAAMAALKERQLVGVLQALARSGKPVLGICLGMQLLFESSSEYGEHAGLGLLSGRVSALPTDLNVKVPQMGWNQNELRRPDSPFASIDAAYTYFVHSYYAVCPATEIVATVQHGVQVPSIVQQQNVIGMQFHPEKSGRVGLQQLAAFKEMVSANDFSSN</sequence>
<proteinExistence type="inferred from homology"/>
<protein>
    <recommendedName>
        <fullName evidence="1">Imidazole glycerol phosphate synthase subunit HisH</fullName>
        <ecNumber evidence="1">4.3.2.10</ecNumber>
    </recommendedName>
    <alternativeName>
        <fullName evidence="1">IGP synthase glutaminase subunit</fullName>
        <ecNumber evidence="1">3.5.1.2</ecNumber>
    </alternativeName>
    <alternativeName>
        <fullName evidence="1">IGP synthase subunit HisH</fullName>
    </alternativeName>
    <alternativeName>
        <fullName evidence="1">ImGP synthase subunit HisH</fullName>
        <shortName evidence="1">IGPS subunit HisH</shortName>
    </alternativeName>
</protein>
<accession>Q88UE1</accession>
<accession>F9UR73</accession>
<keyword id="KW-0028">Amino-acid biosynthesis</keyword>
<keyword id="KW-0963">Cytoplasm</keyword>
<keyword id="KW-0315">Glutamine amidotransferase</keyword>
<keyword id="KW-0368">Histidine biosynthesis</keyword>
<keyword id="KW-0378">Hydrolase</keyword>
<keyword id="KW-0456">Lyase</keyword>
<keyword id="KW-1185">Reference proteome</keyword>
<evidence type="ECO:0000255" key="1">
    <source>
        <dbReference type="HAMAP-Rule" id="MF_00278"/>
    </source>
</evidence>
<comment type="function">
    <text evidence="1">IGPS catalyzes the conversion of PRFAR and glutamine to IGP, AICAR and glutamate. The HisH subunit catalyzes the hydrolysis of glutamine to glutamate and ammonia as part of the synthesis of IGP and AICAR. The resulting ammonia molecule is channeled to the active site of HisF.</text>
</comment>
<comment type="catalytic activity">
    <reaction evidence="1">
        <text>5-[(5-phospho-1-deoxy-D-ribulos-1-ylimino)methylamino]-1-(5-phospho-beta-D-ribosyl)imidazole-4-carboxamide + L-glutamine = D-erythro-1-(imidazol-4-yl)glycerol 3-phosphate + 5-amino-1-(5-phospho-beta-D-ribosyl)imidazole-4-carboxamide + L-glutamate + H(+)</text>
        <dbReference type="Rhea" id="RHEA:24793"/>
        <dbReference type="ChEBI" id="CHEBI:15378"/>
        <dbReference type="ChEBI" id="CHEBI:29985"/>
        <dbReference type="ChEBI" id="CHEBI:58278"/>
        <dbReference type="ChEBI" id="CHEBI:58359"/>
        <dbReference type="ChEBI" id="CHEBI:58475"/>
        <dbReference type="ChEBI" id="CHEBI:58525"/>
        <dbReference type="EC" id="4.3.2.10"/>
    </reaction>
</comment>
<comment type="catalytic activity">
    <reaction evidence="1">
        <text>L-glutamine + H2O = L-glutamate + NH4(+)</text>
        <dbReference type="Rhea" id="RHEA:15889"/>
        <dbReference type="ChEBI" id="CHEBI:15377"/>
        <dbReference type="ChEBI" id="CHEBI:28938"/>
        <dbReference type="ChEBI" id="CHEBI:29985"/>
        <dbReference type="ChEBI" id="CHEBI:58359"/>
        <dbReference type="EC" id="3.5.1.2"/>
    </reaction>
</comment>
<comment type="pathway">
    <text evidence="1">Amino-acid biosynthesis; L-histidine biosynthesis; L-histidine from 5-phospho-alpha-D-ribose 1-diphosphate: step 5/9.</text>
</comment>
<comment type="subunit">
    <text evidence="1">Heterodimer of HisH and HisF.</text>
</comment>
<comment type="subcellular location">
    <subcellularLocation>
        <location evidence="1">Cytoplasm</location>
    </subcellularLocation>
</comment>
<gene>
    <name evidence="1" type="primary">hisH</name>
    <name type="ordered locus">lp_2557</name>
</gene>
<dbReference type="EC" id="4.3.2.10" evidence="1"/>
<dbReference type="EC" id="3.5.1.2" evidence="1"/>
<dbReference type="EMBL" id="AL935263">
    <property type="protein sequence ID" value="CCC79712.1"/>
    <property type="molecule type" value="Genomic_DNA"/>
</dbReference>
<dbReference type="RefSeq" id="WP_011101826.1">
    <property type="nucleotide sequence ID" value="NC_004567.2"/>
</dbReference>
<dbReference type="RefSeq" id="YP_004890226.1">
    <property type="nucleotide sequence ID" value="NC_004567.2"/>
</dbReference>
<dbReference type="SMR" id="Q88UE1"/>
<dbReference type="STRING" id="220668.lp_2557"/>
<dbReference type="EnsemblBacteria" id="CCC79712">
    <property type="protein sequence ID" value="CCC79712"/>
    <property type="gene ID" value="lp_2557"/>
</dbReference>
<dbReference type="GeneID" id="77215823"/>
<dbReference type="KEGG" id="lpl:lp_2557"/>
<dbReference type="PATRIC" id="fig|220668.9.peg.2148"/>
<dbReference type="eggNOG" id="COG0118">
    <property type="taxonomic scope" value="Bacteria"/>
</dbReference>
<dbReference type="HOGENOM" id="CLU_071837_2_2_9"/>
<dbReference type="OrthoDB" id="9807137at2"/>
<dbReference type="PhylomeDB" id="Q88UE1"/>
<dbReference type="UniPathway" id="UPA00031">
    <property type="reaction ID" value="UER00010"/>
</dbReference>
<dbReference type="Proteomes" id="UP000000432">
    <property type="component" value="Chromosome"/>
</dbReference>
<dbReference type="GO" id="GO:0005737">
    <property type="term" value="C:cytoplasm"/>
    <property type="evidence" value="ECO:0007669"/>
    <property type="project" value="UniProtKB-SubCell"/>
</dbReference>
<dbReference type="GO" id="GO:0004359">
    <property type="term" value="F:glutaminase activity"/>
    <property type="evidence" value="ECO:0007669"/>
    <property type="project" value="UniProtKB-EC"/>
</dbReference>
<dbReference type="GO" id="GO:0000107">
    <property type="term" value="F:imidazoleglycerol-phosphate synthase activity"/>
    <property type="evidence" value="ECO:0007669"/>
    <property type="project" value="UniProtKB-UniRule"/>
</dbReference>
<dbReference type="GO" id="GO:0016829">
    <property type="term" value="F:lyase activity"/>
    <property type="evidence" value="ECO:0007669"/>
    <property type="project" value="UniProtKB-KW"/>
</dbReference>
<dbReference type="GO" id="GO:0000105">
    <property type="term" value="P:L-histidine biosynthetic process"/>
    <property type="evidence" value="ECO:0007669"/>
    <property type="project" value="UniProtKB-UniRule"/>
</dbReference>
<dbReference type="CDD" id="cd01748">
    <property type="entry name" value="GATase1_IGP_Synthase"/>
    <property type="match status" value="1"/>
</dbReference>
<dbReference type="Gene3D" id="3.40.50.880">
    <property type="match status" value="1"/>
</dbReference>
<dbReference type="HAMAP" id="MF_00278">
    <property type="entry name" value="HisH"/>
    <property type="match status" value="1"/>
</dbReference>
<dbReference type="InterPro" id="IPR029062">
    <property type="entry name" value="Class_I_gatase-like"/>
</dbReference>
<dbReference type="InterPro" id="IPR017926">
    <property type="entry name" value="GATASE"/>
</dbReference>
<dbReference type="InterPro" id="IPR010139">
    <property type="entry name" value="Imidazole-glycPsynth_HisH"/>
</dbReference>
<dbReference type="NCBIfam" id="TIGR01855">
    <property type="entry name" value="IMP_synth_hisH"/>
    <property type="match status" value="1"/>
</dbReference>
<dbReference type="PANTHER" id="PTHR42701">
    <property type="entry name" value="IMIDAZOLE GLYCEROL PHOSPHATE SYNTHASE SUBUNIT HISH"/>
    <property type="match status" value="1"/>
</dbReference>
<dbReference type="PANTHER" id="PTHR42701:SF1">
    <property type="entry name" value="IMIDAZOLE GLYCEROL PHOSPHATE SYNTHASE SUBUNIT HISH"/>
    <property type="match status" value="1"/>
</dbReference>
<dbReference type="Pfam" id="PF00117">
    <property type="entry name" value="GATase"/>
    <property type="match status" value="1"/>
</dbReference>
<dbReference type="PIRSF" id="PIRSF000495">
    <property type="entry name" value="Amidotransf_hisH"/>
    <property type="match status" value="1"/>
</dbReference>
<dbReference type="SUPFAM" id="SSF52317">
    <property type="entry name" value="Class I glutamine amidotransferase-like"/>
    <property type="match status" value="1"/>
</dbReference>
<dbReference type="PROSITE" id="PS51273">
    <property type="entry name" value="GATASE_TYPE_1"/>
    <property type="match status" value="1"/>
</dbReference>
<name>HIS5_LACPL</name>